<dbReference type="EC" id="7.4.2.10" evidence="1"/>
<dbReference type="EMBL" id="CP000468">
    <property type="protein sequence ID" value="ABJ00207.1"/>
    <property type="status" value="ALT_INIT"/>
    <property type="molecule type" value="Genomic_DNA"/>
</dbReference>
<dbReference type="RefSeq" id="WP_024179257.1">
    <property type="nucleotide sequence ID" value="NC_008563.1"/>
</dbReference>
<dbReference type="SMR" id="A1A967"/>
<dbReference type="KEGG" id="ecv:APECO1_1264"/>
<dbReference type="HOGENOM" id="CLU_000604_86_2_6"/>
<dbReference type="Proteomes" id="UP000008216">
    <property type="component" value="Chromosome"/>
</dbReference>
<dbReference type="GO" id="GO:0005886">
    <property type="term" value="C:plasma membrane"/>
    <property type="evidence" value="ECO:0007669"/>
    <property type="project" value="UniProtKB-SubCell"/>
</dbReference>
<dbReference type="GO" id="GO:0005524">
    <property type="term" value="F:ATP binding"/>
    <property type="evidence" value="ECO:0007669"/>
    <property type="project" value="UniProtKB-KW"/>
</dbReference>
<dbReference type="GO" id="GO:0016887">
    <property type="term" value="F:ATP hydrolysis activity"/>
    <property type="evidence" value="ECO:0007669"/>
    <property type="project" value="InterPro"/>
</dbReference>
<dbReference type="GO" id="GO:0015833">
    <property type="term" value="P:peptide transport"/>
    <property type="evidence" value="ECO:0007669"/>
    <property type="project" value="InterPro"/>
</dbReference>
<dbReference type="GO" id="GO:0055085">
    <property type="term" value="P:transmembrane transport"/>
    <property type="evidence" value="ECO:0007669"/>
    <property type="project" value="UniProtKB-ARBA"/>
</dbReference>
<dbReference type="CDD" id="cd03257">
    <property type="entry name" value="ABC_NikE_OppD_transporters"/>
    <property type="match status" value="2"/>
</dbReference>
<dbReference type="FunFam" id="3.40.50.300:FF:001061">
    <property type="entry name" value="Glutathione import ATP-binding protein GsiA"/>
    <property type="match status" value="1"/>
</dbReference>
<dbReference type="FunFam" id="3.40.50.300:FF:000016">
    <property type="entry name" value="Oligopeptide ABC transporter ATP-binding component"/>
    <property type="match status" value="1"/>
</dbReference>
<dbReference type="Gene3D" id="3.40.50.300">
    <property type="entry name" value="P-loop containing nucleotide triphosphate hydrolases"/>
    <property type="match status" value="2"/>
</dbReference>
<dbReference type="InterPro" id="IPR003593">
    <property type="entry name" value="AAA+_ATPase"/>
</dbReference>
<dbReference type="InterPro" id="IPR050319">
    <property type="entry name" value="ABC_transp_ATP-bind"/>
</dbReference>
<dbReference type="InterPro" id="IPR003439">
    <property type="entry name" value="ABC_transporter-like_ATP-bd"/>
</dbReference>
<dbReference type="InterPro" id="IPR017871">
    <property type="entry name" value="ABC_transporter-like_CS"/>
</dbReference>
<dbReference type="InterPro" id="IPR013563">
    <property type="entry name" value="Oligopep_ABC_C"/>
</dbReference>
<dbReference type="InterPro" id="IPR027417">
    <property type="entry name" value="P-loop_NTPase"/>
</dbReference>
<dbReference type="NCBIfam" id="NF007613">
    <property type="entry name" value="PRK10261.1"/>
    <property type="match status" value="1"/>
</dbReference>
<dbReference type="NCBIfam" id="NF007739">
    <property type="entry name" value="PRK10419.1"/>
    <property type="match status" value="2"/>
</dbReference>
<dbReference type="NCBIfam" id="NF008453">
    <property type="entry name" value="PRK11308.1"/>
    <property type="match status" value="2"/>
</dbReference>
<dbReference type="PANTHER" id="PTHR43776:SF15">
    <property type="entry name" value="GLUTATHIONE IMPORT ATP-BINDING PROTEIN GSIA"/>
    <property type="match status" value="1"/>
</dbReference>
<dbReference type="PANTHER" id="PTHR43776">
    <property type="entry name" value="TRANSPORT ATP-BINDING PROTEIN"/>
    <property type="match status" value="1"/>
</dbReference>
<dbReference type="Pfam" id="PF00005">
    <property type="entry name" value="ABC_tran"/>
    <property type="match status" value="2"/>
</dbReference>
<dbReference type="Pfam" id="PF08352">
    <property type="entry name" value="oligo_HPY"/>
    <property type="match status" value="2"/>
</dbReference>
<dbReference type="SMART" id="SM00382">
    <property type="entry name" value="AAA"/>
    <property type="match status" value="2"/>
</dbReference>
<dbReference type="SUPFAM" id="SSF52540">
    <property type="entry name" value="P-loop containing nucleoside triphosphate hydrolases"/>
    <property type="match status" value="2"/>
</dbReference>
<dbReference type="PROSITE" id="PS00211">
    <property type="entry name" value="ABC_TRANSPORTER_1"/>
    <property type="match status" value="2"/>
</dbReference>
<dbReference type="PROSITE" id="PS50893">
    <property type="entry name" value="ABC_TRANSPORTER_2"/>
    <property type="match status" value="2"/>
</dbReference>
<keyword id="KW-0067">ATP-binding</keyword>
<keyword id="KW-0997">Cell inner membrane</keyword>
<keyword id="KW-1003">Cell membrane</keyword>
<keyword id="KW-0378">Hydrolase</keyword>
<keyword id="KW-0472">Membrane</keyword>
<keyword id="KW-0547">Nucleotide-binding</keyword>
<keyword id="KW-1185">Reference proteome</keyword>
<keyword id="KW-0677">Repeat</keyword>
<keyword id="KW-1278">Translocase</keyword>
<keyword id="KW-0813">Transport</keyword>
<comment type="function">
    <text evidence="1">Part of the ABC transporter complex GsiABCD involved in glutathione import. Responsible for energy coupling to the transport system.</text>
</comment>
<comment type="catalytic activity">
    <reaction evidence="1">
        <text>glutathione(out) + ATP + H2O = glutathione(in) + ADP + phosphate + H(+)</text>
        <dbReference type="Rhea" id="RHEA:29791"/>
        <dbReference type="ChEBI" id="CHEBI:15377"/>
        <dbReference type="ChEBI" id="CHEBI:15378"/>
        <dbReference type="ChEBI" id="CHEBI:30616"/>
        <dbReference type="ChEBI" id="CHEBI:43474"/>
        <dbReference type="ChEBI" id="CHEBI:57925"/>
        <dbReference type="ChEBI" id="CHEBI:456216"/>
        <dbReference type="EC" id="7.4.2.10"/>
    </reaction>
</comment>
<comment type="subunit">
    <text evidence="1">The complex is composed of two ATP-binding proteins (GsiA), two transmembrane proteins (GsiC and GsiD) and a solute-binding protein (GsiB).</text>
</comment>
<comment type="subcellular location">
    <subcellularLocation>
        <location evidence="1">Cell inner membrane</location>
        <topology evidence="1">Peripheral membrane protein</topology>
    </subcellularLocation>
</comment>
<comment type="similarity">
    <text evidence="3">Belongs to the ABC transporter superfamily. Glutathione importer (TC 3.A.1.5.11) family.</text>
</comment>
<comment type="sequence caution" evidence="3">
    <conflict type="erroneous initiation">
        <sequence resource="EMBL-CDS" id="ABJ00207"/>
    </conflict>
</comment>
<feature type="chain" id="PRO_0000280020" description="Glutathione import ATP-binding protein GsiA">
    <location>
        <begin position="1"/>
        <end position="623"/>
    </location>
</feature>
<feature type="domain" description="ABC transporter 1" evidence="2">
    <location>
        <begin position="15"/>
        <end position="269"/>
    </location>
</feature>
<feature type="domain" description="ABC transporter 2" evidence="2">
    <location>
        <begin position="314"/>
        <end position="564"/>
    </location>
</feature>
<feature type="binding site" evidence="2">
    <location>
        <begin position="49"/>
        <end position="56"/>
    </location>
    <ligand>
        <name>ATP</name>
        <dbReference type="ChEBI" id="CHEBI:30616"/>
    </ligand>
</feature>
<feature type="binding site" evidence="2">
    <location>
        <begin position="357"/>
        <end position="364"/>
    </location>
    <ligand>
        <name>ATP</name>
        <dbReference type="ChEBI" id="CHEBI:30616"/>
    </ligand>
</feature>
<protein>
    <recommendedName>
        <fullName evidence="1">Glutathione import ATP-binding protein GsiA</fullName>
        <ecNumber evidence="1">7.4.2.10</ecNumber>
    </recommendedName>
</protein>
<gene>
    <name evidence="1" type="primary">gsiA</name>
    <name type="ordered locus">Ecok1_07130</name>
    <name type="ORF">APECO1_1264</name>
</gene>
<evidence type="ECO:0000250" key="1">
    <source>
        <dbReference type="UniProtKB" id="P75796"/>
    </source>
</evidence>
<evidence type="ECO:0000255" key="2">
    <source>
        <dbReference type="PROSITE-ProRule" id="PRU00434"/>
    </source>
</evidence>
<evidence type="ECO:0000305" key="3"/>
<proteinExistence type="inferred from homology"/>
<name>GSIA_ECOK1</name>
<reference key="1">
    <citation type="journal article" date="2007" name="J. Bacteriol.">
        <title>The genome sequence of avian pathogenic Escherichia coli strain O1:K1:H7 shares strong similarities with human extraintestinal pathogenic E. coli genomes.</title>
        <authorList>
            <person name="Johnson T.J."/>
            <person name="Kariyawasam S."/>
            <person name="Wannemuehler Y."/>
            <person name="Mangiamele P."/>
            <person name="Johnson S.J."/>
            <person name="Doetkott C."/>
            <person name="Skyberg J.A."/>
            <person name="Lynne A.M."/>
            <person name="Johnson J.R."/>
            <person name="Nolan L.K."/>
        </authorList>
    </citation>
    <scope>NUCLEOTIDE SEQUENCE [LARGE SCALE GENOMIC DNA]</scope>
</reference>
<organism>
    <name type="scientific">Escherichia coli O1:K1 / APEC</name>
    <dbReference type="NCBI Taxonomy" id="405955"/>
    <lineage>
        <taxon>Bacteria</taxon>
        <taxon>Pseudomonadati</taxon>
        <taxon>Pseudomonadota</taxon>
        <taxon>Gammaproteobacteria</taxon>
        <taxon>Enterobacterales</taxon>
        <taxon>Enterobacteriaceae</taxon>
        <taxon>Escherichia</taxon>
    </lineage>
</organism>
<sequence>MPHSDELDAGDVLAVENLNIAFMQEQHKIAAVRNLSFSLQRGETLAIVGESGSGKSVTALALMRLLEQAGGLVQCDKMLLQRRSREVIELSEQSAAQMRHVRGADMAMIFQEPMTSLNPVFTVGEQIAESIRLHQNASREEAMVEAKRMLDQVRIPEAQTILSRYPHQLSGGMRQRVMIAMALSCRPAVLIADEPTTALDVTIQAQILQLIKVLQKEMSMGVIFITHDMGVVAEIADRVLVMYQGEAVETGSVEQIFHAPQHPYTRALLAAVPQLGAMKGLDYPRRFPLISLEHPAKQEPPIEQKTVVDGEPVLRVRNLVSRFPLRSGLLNRVTREVHAVEKVSFDLWPGETLSLVGESGSGKSTTGWALLRLVESQGGEIIFNGQRIDTLSPGKLQALRRDIQFIFQDPYASLDPRQTIGDSILEPLRVHGLLPGKEAAARVAWLLERVGLLPEHAWRYPHEFSGGQRQRICIARALALNPKVIIADEAVSALDVSIRGQIINLLLDLQRDFGIAYLFISHDMAVVERISHRVAAMYLGQIVEIGPRRAVFENPQHPYTRKLLAAVPVAEPSRQRPQRVLLSDDLPSNIHLRGEEVAAVSLQCVGPGHYVAQPQSEYAFMRR</sequence>
<accession>A1A967</accession>